<protein>
    <recommendedName>
        <fullName>Phosphoribosylformylglycinamidine synthase</fullName>
        <shortName>FGAM synthase</shortName>
        <shortName>FGAMS</shortName>
        <ecNumber>6.3.5.3</ecNumber>
    </recommendedName>
    <alternativeName>
        <fullName>Formylglycinamide ribonucleotide amidotransferase</fullName>
        <shortName>FGAR amidotransferase</shortName>
        <shortName>FGAR-AT</shortName>
    </alternativeName>
    <alternativeName>
        <fullName>Formylglycinamide ribotide amidotransferase</fullName>
    </alternativeName>
</protein>
<sequence length="1355" mass="149827">MTIQQFYRKPAISEYEIKLLKNNLKKQHNIDIESIETEYCFNVQYPDNHKLNESEQSTLVWLLSETFEPKNFSIDKSFLKTTTTTTENEIIIEVGPRMNFTTTYSSNATSICKSCNLSIIDRIERSRRYLVKSVSKLSEKQIDQFLELIHDRMTECLYPTPIKSFDTGIIPKAVVYIPVVEEGRAALERVNKEMGLAFDEQDLALYTDLFQNQLKRNPSDVECFDIGQSNSEHSRHWFFNGKLIVDGNMSDKTLFQIVKNTLKANPQNSLIAFSDNSSSIKGFKTKVLIPKSQIEASEYLEGEREQPIIFTAETHNFPTGIAPFEGAETGTGGRLRDTHATGRGSLVVAGTVGYCVGNLNIPGYELPWENKEYNYPDNMANPLKIEIEASNGASDYGNKFGEPVIIGFTRSYGNTLPNGERREWIKPIMFSGGIGFMDERHLKKEQPEIGMVVVKAGGPAYRIGMGGGSASSMVGGDNKHELDFSAVQRGDAEMGQKLNRIVRSCVESEIHGGCNPIVSVHDQGAGGAGNVLKEIVDPLGAKIYLDRIISGDPTLSAMEIWGAEYQENDALLIKAEHKDYLKKVSERERLPIAFVGDVTGDGIAQLITKDGETPVNLPLDKVLQKMPPKTFVLDHVEKQLKPFTLPKELLVGDHQTCFNECLNRVLRLLSVGSKRFLINKVDRAVTGLVARQQCVGPLHTPVSNVAVISSGYFGKSGAATSIGEQPIKGFISAKSMAYLTVGEALTNLMWASITDLGDVKCSGNWMWAAKLKGEGVELYDAAIEMHDVMVELGIAIDGGKDSLSMAAKAPKSDGSQELVKAPGALVVSTYVPCDDITLTVTPDLKLSSKDDSVILYLDLGCANNFIGGSALTQVFNQVGNDEPHHNTPLLKNTFMAIQKLVKQQLISAGHDRSDGGLITTLIEMSLSGNRGLEINLPDTHNSDQSPLSIIKLLFSEELGAVLEIKKSNQQIVLDILKQFNVPTQVIGNTSCNNNNNNNNNGSDEDLFIVKVGDKLIYNIKLSQLSKQWEETSYQLELLQANPTFVESEMKNLLKRATGKGKGPNYNMTYKISPISKELALLANKAPKVAVIREEGSNGDREMAAAFHFAGFQAFDVTMSDLLNGNIQLDERFKGVAFVGGFSYGDVMDSAKGWAGSIRFNQQVSKQFDHFYGRNDTFSLGLCNGCQLMALLGWVPYRGIEQTHQPRFIHNASGRFESRWVNVKIMPSPALLLKGMEGSVLGVWSQHGEGRFWSEDQSIVNDIKANNLSPIRYVDDDGEITESYPFNPSGTQEGFASLCSKDGRHLAIMPHPERSFLSWQWPFMPENIKQNVGGLDQPSPWIKIFQNAKSFCDSLN</sequence>
<keyword id="KW-0067">ATP-binding</keyword>
<keyword id="KW-0963">Cytoplasm</keyword>
<keyword id="KW-0903">Direct protein sequencing</keyword>
<keyword id="KW-0315">Glutamine amidotransferase</keyword>
<keyword id="KW-0436">Ligase</keyword>
<keyword id="KW-0460">Magnesium</keyword>
<keyword id="KW-0479">Metal-binding</keyword>
<keyword id="KW-0547">Nucleotide-binding</keyword>
<keyword id="KW-0658">Purine biosynthesis</keyword>
<keyword id="KW-1185">Reference proteome</keyword>
<organism>
    <name type="scientific">Dictyostelium discoideum</name>
    <name type="common">Social amoeba</name>
    <dbReference type="NCBI Taxonomy" id="44689"/>
    <lineage>
        <taxon>Eukaryota</taxon>
        <taxon>Amoebozoa</taxon>
        <taxon>Evosea</taxon>
        <taxon>Eumycetozoa</taxon>
        <taxon>Dictyostelia</taxon>
        <taxon>Dictyosteliales</taxon>
        <taxon>Dictyosteliaceae</taxon>
        <taxon>Dictyostelium</taxon>
    </lineage>
</organism>
<comment type="function">
    <text evidence="1">Phosphoribosylformylglycinamidine synthase involved in the purines biosynthetic pathway. Catalyzes the ATP-dependent conversion of formylglycinamide ribonucleotide (FGAR) and glutamine to yield formylglycinamidine ribonucleotide (FGAM) and glutamate (By similarity).</text>
</comment>
<comment type="catalytic activity">
    <reaction>
        <text>N(2)-formyl-N(1)-(5-phospho-beta-D-ribosyl)glycinamide + L-glutamine + ATP + H2O = 2-formamido-N(1)-(5-O-phospho-beta-D-ribosyl)acetamidine + L-glutamate + ADP + phosphate + H(+)</text>
        <dbReference type="Rhea" id="RHEA:17129"/>
        <dbReference type="ChEBI" id="CHEBI:15377"/>
        <dbReference type="ChEBI" id="CHEBI:15378"/>
        <dbReference type="ChEBI" id="CHEBI:29985"/>
        <dbReference type="ChEBI" id="CHEBI:30616"/>
        <dbReference type="ChEBI" id="CHEBI:43474"/>
        <dbReference type="ChEBI" id="CHEBI:58359"/>
        <dbReference type="ChEBI" id="CHEBI:147286"/>
        <dbReference type="ChEBI" id="CHEBI:147287"/>
        <dbReference type="ChEBI" id="CHEBI:456216"/>
        <dbReference type="EC" id="6.3.5.3"/>
    </reaction>
</comment>
<comment type="pathway">
    <text>Purine metabolism; IMP biosynthesis via de novo pathway; 5-amino-1-(5-phospho-D-ribosyl)imidazole from N(2)-formyl-N(1)-(5-phospho-D-ribosyl)glycinamide: step 1/2.</text>
</comment>
<comment type="subcellular location">
    <subcellularLocation>
        <location evidence="1">Cytoplasm</location>
    </subcellularLocation>
</comment>
<comment type="similarity">
    <text evidence="3">In the N-terminal section; belongs to the FGAMS family.</text>
</comment>
<proteinExistence type="evidence at protein level"/>
<reference key="1">
    <citation type="journal article" date="2005" name="Nature">
        <title>The genome of the social amoeba Dictyostelium discoideum.</title>
        <authorList>
            <person name="Eichinger L."/>
            <person name="Pachebat J.A."/>
            <person name="Gloeckner G."/>
            <person name="Rajandream M.A."/>
            <person name="Sucgang R."/>
            <person name="Berriman M."/>
            <person name="Song J."/>
            <person name="Olsen R."/>
            <person name="Szafranski K."/>
            <person name="Xu Q."/>
            <person name="Tunggal B."/>
            <person name="Kummerfeld S."/>
            <person name="Madera M."/>
            <person name="Konfortov B.A."/>
            <person name="Rivero F."/>
            <person name="Bankier A.T."/>
            <person name="Lehmann R."/>
            <person name="Hamlin N."/>
            <person name="Davies R."/>
            <person name="Gaudet P."/>
            <person name="Fey P."/>
            <person name="Pilcher K."/>
            <person name="Chen G."/>
            <person name="Saunders D."/>
            <person name="Sodergren E.J."/>
            <person name="Davis P."/>
            <person name="Kerhornou A."/>
            <person name="Nie X."/>
            <person name="Hall N."/>
            <person name="Anjard C."/>
            <person name="Hemphill L."/>
            <person name="Bason N."/>
            <person name="Farbrother P."/>
            <person name="Desany B."/>
            <person name="Just E."/>
            <person name="Morio T."/>
            <person name="Rost R."/>
            <person name="Churcher C.M."/>
            <person name="Cooper J."/>
            <person name="Haydock S."/>
            <person name="van Driessche N."/>
            <person name="Cronin A."/>
            <person name="Goodhead I."/>
            <person name="Muzny D.M."/>
            <person name="Mourier T."/>
            <person name="Pain A."/>
            <person name="Lu M."/>
            <person name="Harper D."/>
            <person name="Lindsay R."/>
            <person name="Hauser H."/>
            <person name="James K.D."/>
            <person name="Quiles M."/>
            <person name="Madan Babu M."/>
            <person name="Saito T."/>
            <person name="Buchrieser C."/>
            <person name="Wardroper A."/>
            <person name="Felder M."/>
            <person name="Thangavelu M."/>
            <person name="Johnson D."/>
            <person name="Knights A."/>
            <person name="Loulseged H."/>
            <person name="Mungall K.L."/>
            <person name="Oliver K."/>
            <person name="Price C."/>
            <person name="Quail M.A."/>
            <person name="Urushihara H."/>
            <person name="Hernandez J."/>
            <person name="Rabbinowitsch E."/>
            <person name="Steffen D."/>
            <person name="Sanders M."/>
            <person name="Ma J."/>
            <person name="Kohara Y."/>
            <person name="Sharp S."/>
            <person name="Simmonds M.N."/>
            <person name="Spiegler S."/>
            <person name="Tivey A."/>
            <person name="Sugano S."/>
            <person name="White B."/>
            <person name="Walker D."/>
            <person name="Woodward J.R."/>
            <person name="Winckler T."/>
            <person name="Tanaka Y."/>
            <person name="Shaulsky G."/>
            <person name="Schleicher M."/>
            <person name="Weinstock G.M."/>
            <person name="Rosenthal A."/>
            <person name="Cox E.C."/>
            <person name="Chisholm R.L."/>
            <person name="Gibbs R.A."/>
            <person name="Loomis W.F."/>
            <person name="Platzer M."/>
            <person name="Kay R.R."/>
            <person name="Williams J.G."/>
            <person name="Dear P.H."/>
            <person name="Noegel A.A."/>
            <person name="Barrell B.G."/>
            <person name="Kuspa A."/>
        </authorList>
    </citation>
    <scope>NUCLEOTIDE SEQUENCE [LARGE SCALE GENOMIC DNA]</scope>
    <source>
        <strain>AX4</strain>
    </source>
</reference>
<reference key="2">
    <citation type="submission" date="2010-01" db="UniProtKB">
        <authorList>
            <person name="Bienvenut W.V."/>
            <person name="Veltman D.M."/>
            <person name="Insall R.H."/>
        </authorList>
    </citation>
    <scope>PROTEIN SEQUENCE OF 164-184 AND 534-542</scope>
    <scope>IDENTIFICATION BY MASS SPECTROMETRY</scope>
</reference>
<evidence type="ECO:0000250" key="1"/>
<evidence type="ECO:0000255" key="2"/>
<evidence type="ECO:0000305" key="3"/>
<feature type="chain" id="PRO_0000327671" description="Phosphoribosylformylglycinamidine synthase">
    <location>
        <begin position="1"/>
        <end position="1355"/>
    </location>
</feature>
<feature type="domain" description="Glutamine amidotransferase type-1">
    <location>
        <begin position="1087"/>
        <end position="1325"/>
    </location>
</feature>
<feature type="active site" description="Nucleophile" evidence="1">
    <location>
        <position position="1182"/>
    </location>
</feature>
<feature type="active site" evidence="1">
    <location>
        <position position="1310"/>
    </location>
</feature>
<feature type="active site" evidence="1">
    <location>
        <position position="1312"/>
    </location>
</feature>
<feature type="binding site" evidence="2">
    <location>
        <begin position="326"/>
        <end position="337"/>
    </location>
    <ligand>
        <name>ATP</name>
        <dbReference type="ChEBI" id="CHEBI:30616"/>
    </ligand>
</feature>
<feature type="binding site" evidence="1">
    <location>
        <begin position="406"/>
        <end position="408"/>
    </location>
    <ligand>
        <name>ATP</name>
        <dbReference type="ChEBI" id="CHEBI:30616"/>
    </ligand>
</feature>
<feature type="binding site" evidence="1">
    <location>
        <position position="743"/>
    </location>
    <ligand>
        <name>Mg(2+)</name>
        <dbReference type="ChEBI" id="CHEBI:18420"/>
    </ligand>
</feature>
<feature type="binding site" evidence="1">
    <location>
        <position position="747"/>
    </location>
    <ligand>
        <name>Mg(2+)</name>
        <dbReference type="ChEBI" id="CHEBI:18420"/>
    </ligand>
</feature>
<feature type="binding site" evidence="1">
    <location>
        <position position="911"/>
    </location>
    <ligand>
        <name>Mg(2+)</name>
        <dbReference type="ChEBI" id="CHEBI:18420"/>
    </ligand>
</feature>
<feature type="binding site" evidence="1">
    <location>
        <position position="913"/>
    </location>
    <ligand>
        <name>ATP</name>
        <dbReference type="ChEBI" id="CHEBI:30616"/>
    </ligand>
</feature>
<dbReference type="EC" id="6.3.5.3"/>
<dbReference type="EMBL" id="AAFI02000109">
    <property type="protein sequence ID" value="EAL63360.1"/>
    <property type="molecule type" value="Genomic_DNA"/>
</dbReference>
<dbReference type="RefSeq" id="XP_636865.1">
    <property type="nucleotide sequence ID" value="XM_631773.1"/>
</dbReference>
<dbReference type="SMR" id="Q54JC8"/>
<dbReference type="FunCoup" id="Q54JC8">
    <property type="interactions" value="774"/>
</dbReference>
<dbReference type="STRING" id="44689.Q54JC8"/>
<dbReference type="PaxDb" id="44689-DDB0230086"/>
<dbReference type="EnsemblProtists" id="EAL63360">
    <property type="protein sequence ID" value="EAL63360"/>
    <property type="gene ID" value="DDB_G0288145"/>
</dbReference>
<dbReference type="GeneID" id="8626476"/>
<dbReference type="KEGG" id="ddi:DDB_G0288145"/>
<dbReference type="dictyBase" id="DDB_G0288145">
    <property type="gene designation" value="purL"/>
</dbReference>
<dbReference type="VEuPathDB" id="AmoebaDB:DDB_G0288145"/>
<dbReference type="eggNOG" id="KOG1907">
    <property type="taxonomic scope" value="Eukaryota"/>
</dbReference>
<dbReference type="HOGENOM" id="CLU_001031_0_0_1"/>
<dbReference type="InParanoid" id="Q54JC8"/>
<dbReference type="OMA" id="LSANWMW"/>
<dbReference type="PhylomeDB" id="Q54JC8"/>
<dbReference type="Reactome" id="R-DDI-73817">
    <property type="pathway name" value="Purine ribonucleoside monophosphate biosynthesis"/>
</dbReference>
<dbReference type="UniPathway" id="UPA00074">
    <property type="reaction ID" value="UER00128"/>
</dbReference>
<dbReference type="PRO" id="PR:Q54JC8"/>
<dbReference type="Proteomes" id="UP000002195">
    <property type="component" value="Chromosome 5"/>
</dbReference>
<dbReference type="GO" id="GO:0005737">
    <property type="term" value="C:cytoplasm"/>
    <property type="evidence" value="ECO:0000318"/>
    <property type="project" value="GO_Central"/>
</dbReference>
<dbReference type="GO" id="GO:0005524">
    <property type="term" value="F:ATP binding"/>
    <property type="evidence" value="ECO:0007669"/>
    <property type="project" value="UniProtKB-KW"/>
</dbReference>
<dbReference type="GO" id="GO:0046872">
    <property type="term" value="F:metal ion binding"/>
    <property type="evidence" value="ECO:0007669"/>
    <property type="project" value="UniProtKB-KW"/>
</dbReference>
<dbReference type="GO" id="GO:0004642">
    <property type="term" value="F:phosphoribosylformylglycinamidine synthase activity"/>
    <property type="evidence" value="ECO:0000250"/>
    <property type="project" value="dictyBase"/>
</dbReference>
<dbReference type="GO" id="GO:0006189">
    <property type="term" value="P:'de novo' IMP biosynthetic process"/>
    <property type="evidence" value="ECO:0007669"/>
    <property type="project" value="UniProtKB-UniPathway"/>
</dbReference>
<dbReference type="GO" id="GO:0006164">
    <property type="term" value="P:purine nucleotide biosynthetic process"/>
    <property type="evidence" value="ECO:0000250"/>
    <property type="project" value="dictyBase"/>
</dbReference>
<dbReference type="CDD" id="cd01740">
    <property type="entry name" value="GATase1_FGAR_AT"/>
    <property type="match status" value="1"/>
</dbReference>
<dbReference type="CDD" id="cd02203">
    <property type="entry name" value="PurL_repeat1"/>
    <property type="match status" value="1"/>
</dbReference>
<dbReference type="CDD" id="cd02204">
    <property type="entry name" value="PurL_repeat2"/>
    <property type="match status" value="1"/>
</dbReference>
<dbReference type="FunFam" id="3.90.650.10:FF:000043">
    <property type="entry name" value="Phosphoribosylformylglycinamide synthase"/>
    <property type="match status" value="1"/>
</dbReference>
<dbReference type="FunFam" id="3.90.650.10:FF:000018">
    <property type="entry name" value="Phosphoribosylformylglycinamidine synthase"/>
    <property type="match status" value="1"/>
</dbReference>
<dbReference type="FunFam" id="3.30.1330.10:FF:000007">
    <property type="entry name" value="Phosphoribosylformylglycinamidine synthase, putative"/>
    <property type="match status" value="1"/>
</dbReference>
<dbReference type="FunFam" id="3.30.1330.10:FF:000009">
    <property type="entry name" value="Probable phosphoribosylformylglycinamidine synthase"/>
    <property type="match status" value="1"/>
</dbReference>
<dbReference type="FunFam" id="1.10.8.750:FF:000001">
    <property type="entry name" value="Putative phosphoribosylformylglycinamidine synthase"/>
    <property type="match status" value="1"/>
</dbReference>
<dbReference type="Gene3D" id="3.40.50.880">
    <property type="match status" value="1"/>
</dbReference>
<dbReference type="Gene3D" id="1.10.8.750">
    <property type="entry name" value="Phosphoribosylformylglycinamidine synthase, linker domain"/>
    <property type="match status" value="1"/>
</dbReference>
<dbReference type="Gene3D" id="3.90.650.10">
    <property type="entry name" value="PurM-like C-terminal domain"/>
    <property type="match status" value="2"/>
</dbReference>
<dbReference type="Gene3D" id="3.30.1330.10">
    <property type="entry name" value="PurM-like, N-terminal domain"/>
    <property type="match status" value="2"/>
</dbReference>
<dbReference type="HAMAP" id="MF_00419">
    <property type="entry name" value="PurL_1"/>
    <property type="match status" value="1"/>
</dbReference>
<dbReference type="InterPro" id="IPR029062">
    <property type="entry name" value="Class_I_gatase-like"/>
</dbReference>
<dbReference type="InterPro" id="IPR040707">
    <property type="entry name" value="FGAR-AT_N"/>
</dbReference>
<dbReference type="InterPro" id="IPR055181">
    <property type="entry name" value="FGAR-AT_PurM_N-like"/>
</dbReference>
<dbReference type="InterPro" id="IPR010073">
    <property type="entry name" value="PurL_large"/>
</dbReference>
<dbReference type="InterPro" id="IPR041609">
    <property type="entry name" value="PurL_linker"/>
</dbReference>
<dbReference type="InterPro" id="IPR010918">
    <property type="entry name" value="PurM-like_C_dom"/>
</dbReference>
<dbReference type="InterPro" id="IPR036676">
    <property type="entry name" value="PurM-like_C_sf"/>
</dbReference>
<dbReference type="InterPro" id="IPR036921">
    <property type="entry name" value="PurM-like_N_sf"/>
</dbReference>
<dbReference type="InterPro" id="IPR036604">
    <property type="entry name" value="PurS-like_sf"/>
</dbReference>
<dbReference type="NCBIfam" id="TIGR01735">
    <property type="entry name" value="FGAM_synt"/>
    <property type="match status" value="1"/>
</dbReference>
<dbReference type="NCBIfam" id="NF003672">
    <property type="entry name" value="PRK05297.1"/>
    <property type="match status" value="1"/>
</dbReference>
<dbReference type="PANTHER" id="PTHR10099">
    <property type="entry name" value="PHOSPHORIBOSYLFORMYLGLYCINAMIDINE SYNTHASE"/>
    <property type="match status" value="1"/>
</dbReference>
<dbReference type="PANTHER" id="PTHR10099:SF1">
    <property type="entry name" value="PHOSPHORIBOSYLFORMYLGLYCINAMIDINE SYNTHASE"/>
    <property type="match status" value="1"/>
</dbReference>
<dbReference type="Pfam" id="PF02769">
    <property type="entry name" value="AIRS_C"/>
    <property type="match status" value="2"/>
</dbReference>
<dbReference type="Pfam" id="PF18072">
    <property type="entry name" value="FGAR-AT_linker"/>
    <property type="match status" value="1"/>
</dbReference>
<dbReference type="Pfam" id="PF18076">
    <property type="entry name" value="FGAR-AT_N"/>
    <property type="match status" value="1"/>
</dbReference>
<dbReference type="Pfam" id="PF22689">
    <property type="entry name" value="FGAR-AT_PurM_N-like"/>
    <property type="match status" value="1"/>
</dbReference>
<dbReference type="Pfam" id="PF13507">
    <property type="entry name" value="GATase_5"/>
    <property type="match status" value="1"/>
</dbReference>
<dbReference type="SMART" id="SM01211">
    <property type="entry name" value="GATase_5"/>
    <property type="match status" value="1"/>
</dbReference>
<dbReference type="SUPFAM" id="SSF52317">
    <property type="entry name" value="Class I glutamine amidotransferase-like"/>
    <property type="match status" value="1"/>
</dbReference>
<dbReference type="SUPFAM" id="SSF109736">
    <property type="entry name" value="FGAM synthase PurL, linker domain"/>
    <property type="match status" value="1"/>
</dbReference>
<dbReference type="SUPFAM" id="SSF56042">
    <property type="entry name" value="PurM C-terminal domain-like"/>
    <property type="match status" value="2"/>
</dbReference>
<dbReference type="SUPFAM" id="SSF55326">
    <property type="entry name" value="PurM N-terminal domain-like"/>
    <property type="match status" value="2"/>
</dbReference>
<dbReference type="SUPFAM" id="SSF82697">
    <property type="entry name" value="PurS-like"/>
    <property type="match status" value="1"/>
</dbReference>
<dbReference type="PROSITE" id="PS51273">
    <property type="entry name" value="GATASE_TYPE_1"/>
    <property type="match status" value="1"/>
</dbReference>
<accession>Q54JC8</accession>
<gene>
    <name type="primary">purL</name>
    <name type="ORF">DDB_G0288145</name>
</gene>
<name>PUR4_DICDI</name>